<proteinExistence type="inferred from homology"/>
<evidence type="ECO:0000250" key="1">
    <source>
        <dbReference type="UniProtKB" id="O75306"/>
    </source>
</evidence>
<evidence type="ECO:0000305" key="2"/>
<gene>
    <name type="primary">nad7</name>
    <name type="synonym">ndufs2</name>
</gene>
<name>NDUS2_DICCI</name>
<organism>
    <name type="scientific">Dictyostelium citrinum</name>
    <name type="common">Slime mold</name>
    <dbReference type="NCBI Taxonomy" id="361072"/>
    <lineage>
        <taxon>Eukaryota</taxon>
        <taxon>Amoebozoa</taxon>
        <taxon>Evosea</taxon>
        <taxon>Eumycetozoa</taxon>
        <taxon>Dictyostelia</taxon>
        <taxon>Dictyosteliales</taxon>
        <taxon>Dictyosteliaceae</taxon>
        <taxon>Dictyostelium</taxon>
    </lineage>
</organism>
<geneLocation type="mitochondrion"/>
<comment type="function">
    <text evidence="1">Core subunit of the mitochondrial membrane respiratory chain NADH dehydrogenase (Complex I) that is believed to belong to the minimal assembly required for catalysis. Complex I functions in the transfer of electrons from NADH to the respiratory chain. The immediate electron acceptor for the enzyme is believed to be ubiquinone.</text>
</comment>
<comment type="catalytic activity">
    <reaction>
        <text>a ubiquinone + NADH + 5 H(+)(in) = a ubiquinol + NAD(+) + 4 H(+)(out)</text>
        <dbReference type="Rhea" id="RHEA:29091"/>
        <dbReference type="Rhea" id="RHEA-COMP:9565"/>
        <dbReference type="Rhea" id="RHEA-COMP:9566"/>
        <dbReference type="ChEBI" id="CHEBI:15378"/>
        <dbReference type="ChEBI" id="CHEBI:16389"/>
        <dbReference type="ChEBI" id="CHEBI:17976"/>
        <dbReference type="ChEBI" id="CHEBI:57540"/>
        <dbReference type="ChEBI" id="CHEBI:57945"/>
        <dbReference type="EC" id="7.1.1.2"/>
    </reaction>
</comment>
<comment type="subunit">
    <text evidence="1">Complex I is composed of 45 different subunits. Component of the iron-sulfur (IP) fragment of the enzyme.</text>
</comment>
<comment type="subcellular location">
    <subcellularLocation>
        <location evidence="1">Mitochondrion inner membrane</location>
        <topology evidence="1">Peripheral membrane protein</topology>
        <orientation evidence="1">Matrix side</orientation>
    </subcellularLocation>
</comment>
<comment type="similarity">
    <text evidence="2">Belongs to the complex I 49 kDa subunit family.</text>
</comment>
<protein>
    <recommendedName>
        <fullName>NADH-ubiquinone oxidoreductase 49 kDa subunit</fullName>
        <ecNumber>7.1.1.2</ecNumber>
    </recommendedName>
    <alternativeName>
        <fullName>NADH dehydrogenase subunit 7</fullName>
    </alternativeName>
</protein>
<dbReference type="EC" id="7.1.1.2"/>
<dbReference type="EMBL" id="DQ336395">
    <property type="protein sequence ID" value="ABC60378.1"/>
    <property type="molecule type" value="Genomic_DNA"/>
</dbReference>
<dbReference type="RefSeq" id="YP_492627.1">
    <property type="nucleotide sequence ID" value="NC_007787.2"/>
</dbReference>
<dbReference type="SMR" id="Q2LCR5"/>
<dbReference type="GeneID" id="3912609"/>
<dbReference type="GO" id="GO:0005743">
    <property type="term" value="C:mitochondrial inner membrane"/>
    <property type="evidence" value="ECO:0007669"/>
    <property type="project" value="UniProtKB-SubCell"/>
</dbReference>
<dbReference type="GO" id="GO:0051287">
    <property type="term" value="F:NAD binding"/>
    <property type="evidence" value="ECO:0007669"/>
    <property type="project" value="InterPro"/>
</dbReference>
<dbReference type="GO" id="GO:0008137">
    <property type="term" value="F:NADH dehydrogenase (ubiquinone) activity"/>
    <property type="evidence" value="ECO:0007669"/>
    <property type="project" value="UniProtKB-EC"/>
</dbReference>
<dbReference type="GO" id="GO:0048038">
    <property type="term" value="F:quinone binding"/>
    <property type="evidence" value="ECO:0007669"/>
    <property type="project" value="InterPro"/>
</dbReference>
<dbReference type="GO" id="GO:0006120">
    <property type="term" value="P:mitochondrial electron transport, NADH to ubiquinone"/>
    <property type="evidence" value="ECO:0007669"/>
    <property type="project" value="TreeGrafter"/>
</dbReference>
<dbReference type="FunFam" id="1.10.645.10:FF:000005">
    <property type="entry name" value="NADH-quinone oxidoreductase subunit D"/>
    <property type="match status" value="1"/>
</dbReference>
<dbReference type="Gene3D" id="1.10.645.10">
    <property type="entry name" value="Cytochrome-c3 Hydrogenase, chain B"/>
    <property type="match status" value="1"/>
</dbReference>
<dbReference type="HAMAP" id="MF_01358">
    <property type="entry name" value="NDH1_NuoD"/>
    <property type="match status" value="1"/>
</dbReference>
<dbReference type="InterPro" id="IPR001135">
    <property type="entry name" value="NADH_Q_OxRdtase_suD"/>
</dbReference>
<dbReference type="InterPro" id="IPR014029">
    <property type="entry name" value="NADH_UbQ_OxRdtase_49kDa_CS"/>
</dbReference>
<dbReference type="InterPro" id="IPR022885">
    <property type="entry name" value="NDH1_su_D/H"/>
</dbReference>
<dbReference type="InterPro" id="IPR029014">
    <property type="entry name" value="NiFe-Hase_large"/>
</dbReference>
<dbReference type="NCBIfam" id="TIGR01962">
    <property type="entry name" value="NuoD"/>
    <property type="match status" value="1"/>
</dbReference>
<dbReference type="NCBIfam" id="NF004739">
    <property type="entry name" value="PRK06075.1"/>
    <property type="match status" value="1"/>
</dbReference>
<dbReference type="PANTHER" id="PTHR11993:SF10">
    <property type="entry name" value="NADH DEHYDROGENASE [UBIQUINONE] IRON-SULFUR PROTEIN 2, MITOCHONDRIAL"/>
    <property type="match status" value="1"/>
</dbReference>
<dbReference type="PANTHER" id="PTHR11993">
    <property type="entry name" value="NADH-UBIQUINONE OXIDOREDUCTASE 49 KDA SUBUNIT"/>
    <property type="match status" value="1"/>
</dbReference>
<dbReference type="Pfam" id="PF00346">
    <property type="entry name" value="Complex1_49kDa"/>
    <property type="match status" value="1"/>
</dbReference>
<dbReference type="SUPFAM" id="SSF56762">
    <property type="entry name" value="HydB/Nqo4-like"/>
    <property type="match status" value="1"/>
</dbReference>
<dbReference type="PROSITE" id="PS00535">
    <property type="entry name" value="COMPLEX1_49K"/>
    <property type="match status" value="1"/>
</dbReference>
<feature type="chain" id="PRO_0000312396" description="NADH-ubiquinone oxidoreductase 49 kDa subunit">
    <location>
        <begin position="1"/>
        <end position="406"/>
    </location>
</feature>
<keyword id="KW-0249">Electron transport</keyword>
<keyword id="KW-0472">Membrane</keyword>
<keyword id="KW-0496">Mitochondrion</keyword>
<keyword id="KW-0999">Mitochondrion inner membrane</keyword>
<keyword id="KW-0520">NAD</keyword>
<keyword id="KW-0560">Oxidoreductase</keyword>
<keyword id="KW-0679">Respiratory chain</keyword>
<keyword id="KW-1278">Translocase</keyword>
<keyword id="KW-0813">Transport</keyword>
<keyword id="KW-0830">Ubiquinone</keyword>
<reference key="1">
    <citation type="journal article" date="2008" name="Mol. Biol. Evol.">
        <title>Mitochondrial genome evolution in the social amoebae.</title>
        <authorList>
            <person name="Heidel A.J."/>
            <person name="Gloeckner G."/>
        </authorList>
    </citation>
    <scope>NUCLEOTIDE SEQUENCE [LARGE SCALE GENOMIC DNA]</scope>
</reference>
<sequence>MLNISKIFEEVKVMKNFTLNFGPQHPAAHGVLRLIVELESENVVRVEPHIGLLHRGTEKLIEGKTYTQALPYFDRLDYVSMNVQEHAYSLAVERLYLDSLDIELEIPQRAKVIRVLFSEITRVLNHIMATTTHAMDVGALTPFLWAFEEREKLMEFYERVSGARMHAAYIRPGGVAFDLPMNISEDIYKFVIQYRKRLEEIEDMLINNRIWKQRLVDIGIVSAEEALNYGFTGPLLRGAGIVYDIRKNYPYDDYDKYDFKIIIGEENNSYTRFIIRMKEMYQSLAIIEQALNNLRPGLIKLEGVNITAPDRAFVKKDMESCINHFKFFSEGFIIPANENYTIVEAPKGEFGIYLNANDTAKPYRCRIKAPGFLHLQGLNMMSKDHLLADVVTLIGTQDIVFGEVDR</sequence>
<accession>Q2LCR5</accession>